<protein>
    <recommendedName>
        <fullName evidence="1">Cardiolipin synthase A</fullName>
        <shortName evidence="1">CL synthase</shortName>
        <ecNumber evidence="1">2.7.8.-</ecNumber>
    </recommendedName>
</protein>
<reference key="1">
    <citation type="submission" date="2008-02" db="EMBL/GenBank/DDBJ databases">
        <title>Complete sequence of Escherichia coli C str. ATCC 8739.</title>
        <authorList>
            <person name="Copeland A."/>
            <person name="Lucas S."/>
            <person name="Lapidus A."/>
            <person name="Glavina del Rio T."/>
            <person name="Dalin E."/>
            <person name="Tice H."/>
            <person name="Bruce D."/>
            <person name="Goodwin L."/>
            <person name="Pitluck S."/>
            <person name="Kiss H."/>
            <person name="Brettin T."/>
            <person name="Detter J.C."/>
            <person name="Han C."/>
            <person name="Kuske C.R."/>
            <person name="Schmutz J."/>
            <person name="Larimer F."/>
            <person name="Land M."/>
            <person name="Hauser L."/>
            <person name="Kyrpides N."/>
            <person name="Mikhailova N."/>
            <person name="Ingram L."/>
            <person name="Richardson P."/>
        </authorList>
    </citation>
    <scope>NUCLEOTIDE SEQUENCE [LARGE SCALE GENOMIC DNA]</scope>
    <source>
        <strain>ATCC 8739 / DSM 1576 / NBRC 3972 / NCIMB 8545 / WDCM 00012 / Crooks</strain>
    </source>
</reference>
<keyword id="KW-0997">Cell inner membrane</keyword>
<keyword id="KW-1003">Cell membrane</keyword>
<keyword id="KW-0444">Lipid biosynthesis</keyword>
<keyword id="KW-0443">Lipid metabolism</keyword>
<keyword id="KW-0472">Membrane</keyword>
<keyword id="KW-0594">Phospholipid biosynthesis</keyword>
<keyword id="KW-1208">Phospholipid metabolism</keyword>
<keyword id="KW-0677">Repeat</keyword>
<keyword id="KW-0808">Transferase</keyword>
<keyword id="KW-0812">Transmembrane</keyword>
<keyword id="KW-1133">Transmembrane helix</keyword>
<name>CLSA_ECOLC</name>
<evidence type="ECO:0000255" key="1">
    <source>
        <dbReference type="HAMAP-Rule" id="MF_00190"/>
    </source>
</evidence>
<comment type="function">
    <text evidence="1">Catalyzes the reversible phosphatidyl group transfer from one phosphatidylglycerol molecule to another to form cardiolipin (CL) (diphosphatidylglycerol) and glycerol.</text>
</comment>
<comment type="catalytic activity">
    <reaction evidence="1">
        <text>2 a 1,2-diacyl-sn-glycero-3-phospho-(1'-sn-glycerol) = a cardiolipin + glycerol</text>
        <dbReference type="Rhea" id="RHEA:31451"/>
        <dbReference type="ChEBI" id="CHEBI:17754"/>
        <dbReference type="ChEBI" id="CHEBI:62237"/>
        <dbReference type="ChEBI" id="CHEBI:64716"/>
    </reaction>
</comment>
<comment type="subcellular location">
    <subcellularLocation>
        <location evidence="1">Cell inner membrane</location>
        <topology evidence="1">Multi-pass membrane protein</topology>
    </subcellularLocation>
</comment>
<comment type="similarity">
    <text evidence="1">Belongs to the phospholipase D family. Cardiolipin synthase subfamily. ClsA sub-subfamily.</text>
</comment>
<proteinExistence type="inferred from homology"/>
<organism>
    <name type="scientific">Escherichia coli (strain ATCC 8739 / DSM 1576 / NBRC 3972 / NCIMB 8545 / WDCM 00012 / Crooks)</name>
    <dbReference type="NCBI Taxonomy" id="481805"/>
    <lineage>
        <taxon>Bacteria</taxon>
        <taxon>Pseudomonadati</taxon>
        <taxon>Pseudomonadota</taxon>
        <taxon>Gammaproteobacteria</taxon>
        <taxon>Enterobacterales</taxon>
        <taxon>Enterobacteriaceae</taxon>
        <taxon>Escherichia</taxon>
    </lineage>
</organism>
<dbReference type="EC" id="2.7.8.-" evidence="1"/>
<dbReference type="EMBL" id="CP000946">
    <property type="protein sequence ID" value="ACA78014.1"/>
    <property type="molecule type" value="Genomic_DNA"/>
</dbReference>
<dbReference type="RefSeq" id="WP_000214516.1">
    <property type="nucleotide sequence ID" value="NZ_MTFT01000016.1"/>
</dbReference>
<dbReference type="SMR" id="B1ITK7"/>
<dbReference type="GeneID" id="93775314"/>
<dbReference type="KEGG" id="ecl:EcolC_2379"/>
<dbReference type="HOGENOM" id="CLU_038053_1_0_6"/>
<dbReference type="GO" id="GO:0005886">
    <property type="term" value="C:plasma membrane"/>
    <property type="evidence" value="ECO:0007669"/>
    <property type="project" value="UniProtKB-SubCell"/>
</dbReference>
<dbReference type="GO" id="GO:0008808">
    <property type="term" value="F:cardiolipin synthase activity"/>
    <property type="evidence" value="ECO:0007669"/>
    <property type="project" value="InterPro"/>
</dbReference>
<dbReference type="GO" id="GO:0032049">
    <property type="term" value="P:cardiolipin biosynthetic process"/>
    <property type="evidence" value="ECO:0007669"/>
    <property type="project" value="InterPro"/>
</dbReference>
<dbReference type="CDD" id="cd09152">
    <property type="entry name" value="PLDc_EcCLS_like_1"/>
    <property type="match status" value="1"/>
</dbReference>
<dbReference type="CDD" id="cd09158">
    <property type="entry name" value="PLDc_EcCLS_like_2"/>
    <property type="match status" value="1"/>
</dbReference>
<dbReference type="FunFam" id="3.30.870.10:FF:000002">
    <property type="entry name" value="Cardiolipin synthase A"/>
    <property type="match status" value="1"/>
</dbReference>
<dbReference type="FunFam" id="3.30.870.10:FF:000003">
    <property type="entry name" value="Cardiolipin synthase A"/>
    <property type="match status" value="1"/>
</dbReference>
<dbReference type="Gene3D" id="3.30.870.10">
    <property type="entry name" value="Endonuclease Chain A"/>
    <property type="match status" value="2"/>
</dbReference>
<dbReference type="HAMAP" id="MF_00190">
    <property type="entry name" value="Cardiolipin_synth_ClsA"/>
    <property type="match status" value="1"/>
</dbReference>
<dbReference type="InterPro" id="IPR022924">
    <property type="entry name" value="Cardiolipin_synthase"/>
</dbReference>
<dbReference type="InterPro" id="IPR030840">
    <property type="entry name" value="CL_synthase_A"/>
</dbReference>
<dbReference type="InterPro" id="IPR027379">
    <property type="entry name" value="CLS_N"/>
</dbReference>
<dbReference type="InterPro" id="IPR025202">
    <property type="entry name" value="PLD-like_dom"/>
</dbReference>
<dbReference type="InterPro" id="IPR001736">
    <property type="entry name" value="PLipase_D/transphosphatidylase"/>
</dbReference>
<dbReference type="NCBIfam" id="TIGR04265">
    <property type="entry name" value="bac_cardiolipin"/>
    <property type="match status" value="1"/>
</dbReference>
<dbReference type="PANTHER" id="PTHR21248">
    <property type="entry name" value="CARDIOLIPIN SYNTHASE"/>
    <property type="match status" value="1"/>
</dbReference>
<dbReference type="PANTHER" id="PTHR21248:SF22">
    <property type="entry name" value="PHOSPHOLIPASE D"/>
    <property type="match status" value="1"/>
</dbReference>
<dbReference type="Pfam" id="PF13091">
    <property type="entry name" value="PLDc_2"/>
    <property type="match status" value="2"/>
</dbReference>
<dbReference type="Pfam" id="PF13396">
    <property type="entry name" value="PLDc_N"/>
    <property type="match status" value="1"/>
</dbReference>
<dbReference type="SMART" id="SM00155">
    <property type="entry name" value="PLDc"/>
    <property type="match status" value="2"/>
</dbReference>
<dbReference type="SUPFAM" id="SSF56024">
    <property type="entry name" value="Phospholipase D/nuclease"/>
    <property type="match status" value="2"/>
</dbReference>
<dbReference type="PROSITE" id="PS50035">
    <property type="entry name" value="PLD"/>
    <property type="match status" value="2"/>
</dbReference>
<accession>B1ITK7</accession>
<feature type="chain" id="PRO_1000077497" description="Cardiolipin synthase A">
    <location>
        <begin position="1"/>
        <end position="486"/>
    </location>
</feature>
<feature type="transmembrane region" description="Helical" evidence="1">
    <location>
        <begin position="3"/>
        <end position="23"/>
    </location>
</feature>
<feature type="transmembrane region" description="Helical" evidence="1">
    <location>
        <begin position="38"/>
        <end position="58"/>
    </location>
</feature>
<feature type="domain" description="PLD phosphodiesterase 1" evidence="1">
    <location>
        <begin position="219"/>
        <end position="246"/>
    </location>
</feature>
<feature type="domain" description="PLD phosphodiesterase 2" evidence="1">
    <location>
        <begin position="399"/>
        <end position="426"/>
    </location>
</feature>
<feature type="active site" evidence="1">
    <location>
        <position position="224"/>
    </location>
</feature>
<feature type="active site" evidence="1">
    <location>
        <position position="226"/>
    </location>
</feature>
<feature type="active site" evidence="1">
    <location>
        <position position="231"/>
    </location>
</feature>
<feature type="active site" evidence="1">
    <location>
        <position position="404"/>
    </location>
</feature>
<feature type="active site" evidence="1">
    <location>
        <position position="406"/>
    </location>
</feature>
<feature type="active site" evidence="1">
    <location>
        <position position="411"/>
    </location>
</feature>
<sequence>MTTVYTLVSWLAILGYWLLIAGVTLRILMKRRAVPSAMAWLLIIYILPLVGIIAYLAVGELHLGKRRAERARAMWPSTAKWLNDLKACKHIFAEENSSVAAPLFKLCERRQGIAGVKGNQLQLMTESDDVMQALIRDIQLARHNIEMVFYIWQPGGMADQVAESLMAAARRGIHCRLMLDSAGSVAFFRSPWPELMRNAGIEVVEALKVNLMRVFLRRMDLRQHRKMIMIDNYIAYTGSMNMVDPRYFKQDAGVGQWIDLMARMEGPIATAMGIIYSCDWEIETGKRILPPPPDVNIMPFEQASGHTIHTIASGPGFPEDLIHQALLTAAYSAREYLIMTTPYFVPSDDLLHAICTAAQRGVDVSIILPRKNDSMLVGWASRAFFTELLAAGVKIYQFEGGLLHTKSVLVDGELSLVGTVNLDMRSLWLNFEITLAIDDKGFGADLAAVQDDYISRSRLLDARLWLKRPLWQRVAERLFYFFSPLL</sequence>
<gene>
    <name evidence="1" type="primary">clsA</name>
    <name type="synonym">cls</name>
    <name type="ordered locus">EcolC_2379</name>
</gene>